<evidence type="ECO:0000255" key="1">
    <source>
        <dbReference type="HAMAP-Rule" id="MF_00435"/>
    </source>
</evidence>
<evidence type="ECO:0000255" key="2">
    <source>
        <dbReference type="PROSITE-ProRule" id="PRU01197"/>
    </source>
</evidence>
<evidence type="ECO:0000255" key="3">
    <source>
        <dbReference type="PROSITE-ProRule" id="PRU01198"/>
    </source>
</evidence>
<keyword id="KW-0028">Amino-acid biosynthesis</keyword>
<keyword id="KW-0100">Branched-chain amino acid biosynthesis</keyword>
<keyword id="KW-0460">Magnesium</keyword>
<keyword id="KW-0479">Metal-binding</keyword>
<keyword id="KW-0521">NADP</keyword>
<keyword id="KW-0560">Oxidoreductase</keyword>
<keyword id="KW-0677">Repeat</keyword>
<proteinExistence type="inferred from homology"/>
<feature type="chain" id="PRO_1000190955" description="Ketol-acid reductoisomerase (NADP(+))">
    <location>
        <begin position="1"/>
        <end position="491"/>
    </location>
</feature>
<feature type="domain" description="KARI N-terminal Rossmann" evidence="2">
    <location>
        <begin position="15"/>
        <end position="208"/>
    </location>
</feature>
<feature type="domain" description="KARI C-terminal knotted 1" evidence="3">
    <location>
        <begin position="209"/>
        <end position="344"/>
    </location>
</feature>
<feature type="domain" description="KARI C-terminal knotted 2" evidence="3">
    <location>
        <begin position="345"/>
        <end position="484"/>
    </location>
</feature>
<feature type="active site" evidence="1">
    <location>
        <position position="132"/>
    </location>
</feature>
<feature type="binding site" evidence="1">
    <location>
        <begin position="45"/>
        <end position="48"/>
    </location>
    <ligand>
        <name>NADP(+)</name>
        <dbReference type="ChEBI" id="CHEBI:58349"/>
    </ligand>
</feature>
<feature type="binding site" evidence="1">
    <location>
        <position position="68"/>
    </location>
    <ligand>
        <name>NADP(+)</name>
        <dbReference type="ChEBI" id="CHEBI:58349"/>
    </ligand>
</feature>
<feature type="binding site" evidence="1">
    <location>
        <position position="76"/>
    </location>
    <ligand>
        <name>NADP(+)</name>
        <dbReference type="ChEBI" id="CHEBI:58349"/>
    </ligand>
</feature>
<feature type="binding site" evidence="1">
    <location>
        <position position="78"/>
    </location>
    <ligand>
        <name>NADP(+)</name>
        <dbReference type="ChEBI" id="CHEBI:58349"/>
    </ligand>
</feature>
<feature type="binding site" evidence="1">
    <location>
        <begin position="108"/>
        <end position="110"/>
    </location>
    <ligand>
        <name>NADP(+)</name>
        <dbReference type="ChEBI" id="CHEBI:58349"/>
    </ligand>
</feature>
<feature type="binding site" evidence="1">
    <location>
        <position position="158"/>
    </location>
    <ligand>
        <name>NADP(+)</name>
        <dbReference type="ChEBI" id="CHEBI:58349"/>
    </ligand>
</feature>
<feature type="binding site" evidence="1">
    <location>
        <position position="217"/>
    </location>
    <ligand>
        <name>Mg(2+)</name>
        <dbReference type="ChEBI" id="CHEBI:18420"/>
        <label>1</label>
    </ligand>
</feature>
<feature type="binding site" evidence="1">
    <location>
        <position position="217"/>
    </location>
    <ligand>
        <name>Mg(2+)</name>
        <dbReference type="ChEBI" id="CHEBI:18420"/>
        <label>2</label>
    </ligand>
</feature>
<feature type="binding site" evidence="1">
    <location>
        <position position="221"/>
    </location>
    <ligand>
        <name>Mg(2+)</name>
        <dbReference type="ChEBI" id="CHEBI:18420"/>
        <label>1</label>
    </ligand>
</feature>
<feature type="binding site" evidence="1">
    <location>
        <position position="389"/>
    </location>
    <ligand>
        <name>Mg(2+)</name>
        <dbReference type="ChEBI" id="CHEBI:18420"/>
        <label>2</label>
    </ligand>
</feature>
<feature type="binding site" evidence="1">
    <location>
        <position position="393"/>
    </location>
    <ligand>
        <name>Mg(2+)</name>
        <dbReference type="ChEBI" id="CHEBI:18420"/>
        <label>2</label>
    </ligand>
</feature>
<feature type="binding site" evidence="1">
    <location>
        <position position="414"/>
    </location>
    <ligand>
        <name>substrate</name>
    </ligand>
</feature>
<dbReference type="EC" id="1.1.1.86" evidence="1"/>
<dbReference type="EMBL" id="AP009240">
    <property type="protein sequence ID" value="BAG79581.1"/>
    <property type="molecule type" value="Genomic_DNA"/>
</dbReference>
<dbReference type="RefSeq" id="WP_000024951.1">
    <property type="nucleotide sequence ID" value="NC_011415.1"/>
</dbReference>
<dbReference type="SMR" id="B6I4B1"/>
<dbReference type="GeneID" id="75204765"/>
<dbReference type="KEGG" id="ecy:ECSE_4057"/>
<dbReference type="HOGENOM" id="CLU_551905_0_0_6"/>
<dbReference type="UniPathway" id="UPA00047">
    <property type="reaction ID" value="UER00056"/>
</dbReference>
<dbReference type="UniPathway" id="UPA00049">
    <property type="reaction ID" value="UER00060"/>
</dbReference>
<dbReference type="Proteomes" id="UP000008199">
    <property type="component" value="Chromosome"/>
</dbReference>
<dbReference type="GO" id="GO:0005829">
    <property type="term" value="C:cytosol"/>
    <property type="evidence" value="ECO:0007669"/>
    <property type="project" value="TreeGrafter"/>
</dbReference>
<dbReference type="GO" id="GO:0004455">
    <property type="term" value="F:ketol-acid reductoisomerase activity"/>
    <property type="evidence" value="ECO:0007669"/>
    <property type="project" value="UniProtKB-UniRule"/>
</dbReference>
<dbReference type="GO" id="GO:0000287">
    <property type="term" value="F:magnesium ion binding"/>
    <property type="evidence" value="ECO:0007669"/>
    <property type="project" value="UniProtKB-UniRule"/>
</dbReference>
<dbReference type="GO" id="GO:0009097">
    <property type="term" value="P:isoleucine biosynthetic process"/>
    <property type="evidence" value="ECO:0007669"/>
    <property type="project" value="UniProtKB-UniRule"/>
</dbReference>
<dbReference type="GO" id="GO:0009099">
    <property type="term" value="P:L-valine biosynthetic process"/>
    <property type="evidence" value="ECO:0007669"/>
    <property type="project" value="UniProtKB-UniRule"/>
</dbReference>
<dbReference type="FunFam" id="1.10.1040.10:FF:000007">
    <property type="entry name" value="Ketol-acid reductoisomerase (NADP(+))"/>
    <property type="match status" value="1"/>
</dbReference>
<dbReference type="FunFam" id="3.40.50.720:FF:000043">
    <property type="entry name" value="Ketol-acid reductoisomerase (NADP(+))"/>
    <property type="match status" value="1"/>
</dbReference>
<dbReference type="Gene3D" id="1.10.1040.10">
    <property type="entry name" value="N-(1-d-carboxylethyl)-l-norvaline Dehydrogenase, domain 2"/>
    <property type="match status" value="1"/>
</dbReference>
<dbReference type="Gene3D" id="3.40.50.720">
    <property type="entry name" value="NAD(P)-binding Rossmann-like Domain"/>
    <property type="match status" value="1"/>
</dbReference>
<dbReference type="HAMAP" id="MF_00435">
    <property type="entry name" value="IlvC"/>
    <property type="match status" value="1"/>
</dbReference>
<dbReference type="InterPro" id="IPR008927">
    <property type="entry name" value="6-PGluconate_DH-like_C_sf"/>
</dbReference>
<dbReference type="InterPro" id="IPR013328">
    <property type="entry name" value="6PGD_dom2"/>
</dbReference>
<dbReference type="InterPro" id="IPR013023">
    <property type="entry name" value="KARI"/>
</dbReference>
<dbReference type="InterPro" id="IPR000506">
    <property type="entry name" value="KARI_C"/>
</dbReference>
<dbReference type="InterPro" id="IPR013116">
    <property type="entry name" value="KARI_N"/>
</dbReference>
<dbReference type="InterPro" id="IPR036291">
    <property type="entry name" value="NAD(P)-bd_dom_sf"/>
</dbReference>
<dbReference type="NCBIfam" id="TIGR00465">
    <property type="entry name" value="ilvC"/>
    <property type="match status" value="1"/>
</dbReference>
<dbReference type="NCBIfam" id="NF003557">
    <property type="entry name" value="PRK05225.1"/>
    <property type="match status" value="1"/>
</dbReference>
<dbReference type="PANTHER" id="PTHR21371">
    <property type="entry name" value="KETOL-ACID REDUCTOISOMERASE, MITOCHONDRIAL"/>
    <property type="match status" value="1"/>
</dbReference>
<dbReference type="PANTHER" id="PTHR21371:SF1">
    <property type="entry name" value="KETOL-ACID REDUCTOISOMERASE, MITOCHONDRIAL"/>
    <property type="match status" value="1"/>
</dbReference>
<dbReference type="Pfam" id="PF01450">
    <property type="entry name" value="KARI_C"/>
    <property type="match status" value="2"/>
</dbReference>
<dbReference type="Pfam" id="PF07991">
    <property type="entry name" value="KARI_N"/>
    <property type="match status" value="1"/>
</dbReference>
<dbReference type="SUPFAM" id="SSF48179">
    <property type="entry name" value="6-phosphogluconate dehydrogenase C-terminal domain-like"/>
    <property type="match status" value="2"/>
</dbReference>
<dbReference type="SUPFAM" id="SSF51735">
    <property type="entry name" value="NAD(P)-binding Rossmann-fold domains"/>
    <property type="match status" value="1"/>
</dbReference>
<dbReference type="PROSITE" id="PS51851">
    <property type="entry name" value="KARI_C"/>
    <property type="match status" value="2"/>
</dbReference>
<dbReference type="PROSITE" id="PS51850">
    <property type="entry name" value="KARI_N"/>
    <property type="match status" value="1"/>
</dbReference>
<protein>
    <recommendedName>
        <fullName evidence="1">Ketol-acid reductoisomerase (NADP(+))</fullName>
        <shortName evidence="1">KARI</shortName>
        <ecNumber evidence="1">1.1.1.86</ecNumber>
    </recommendedName>
    <alternativeName>
        <fullName evidence="1">Acetohydroxy-acid isomeroreductase</fullName>
        <shortName evidence="1">AHIR</shortName>
    </alternativeName>
    <alternativeName>
        <fullName evidence="1">Alpha-keto-beta-hydroxylacyl reductoisomerase</fullName>
    </alternativeName>
    <alternativeName>
        <fullName evidence="1">Ketol-acid reductoisomerase type 2</fullName>
    </alternativeName>
    <alternativeName>
        <fullName evidence="1">Ketol-acid reductoisomerase type II</fullName>
    </alternativeName>
</protein>
<name>ILVC_ECOSE</name>
<comment type="function">
    <text evidence="1">Involved in the biosynthesis of branched-chain amino acids (BCAA). Catalyzes an alkyl-migration followed by a ketol-acid reduction of (S)-2-acetolactate (S2AL) to yield (R)-2,3-dihydroxy-isovalerate. In the isomerase reaction, S2AL is rearranged via a Mg-dependent methyl migration to produce 3-hydroxy-3-methyl-2-ketobutyrate (HMKB). In the reductase reaction, this 2-ketoacid undergoes a metal-dependent reduction by NADPH to yield (R)-2,3-dihydroxy-isovalerate.</text>
</comment>
<comment type="catalytic activity">
    <reaction evidence="1">
        <text>(2R)-2,3-dihydroxy-3-methylbutanoate + NADP(+) = (2S)-2-acetolactate + NADPH + H(+)</text>
        <dbReference type="Rhea" id="RHEA:22068"/>
        <dbReference type="ChEBI" id="CHEBI:15378"/>
        <dbReference type="ChEBI" id="CHEBI:49072"/>
        <dbReference type="ChEBI" id="CHEBI:57783"/>
        <dbReference type="ChEBI" id="CHEBI:58349"/>
        <dbReference type="ChEBI" id="CHEBI:58476"/>
        <dbReference type="EC" id="1.1.1.86"/>
    </reaction>
</comment>
<comment type="catalytic activity">
    <reaction evidence="1">
        <text>(2R,3R)-2,3-dihydroxy-3-methylpentanoate + NADP(+) = (S)-2-ethyl-2-hydroxy-3-oxobutanoate + NADPH + H(+)</text>
        <dbReference type="Rhea" id="RHEA:13493"/>
        <dbReference type="ChEBI" id="CHEBI:15378"/>
        <dbReference type="ChEBI" id="CHEBI:49256"/>
        <dbReference type="ChEBI" id="CHEBI:49258"/>
        <dbReference type="ChEBI" id="CHEBI:57783"/>
        <dbReference type="ChEBI" id="CHEBI:58349"/>
        <dbReference type="EC" id="1.1.1.86"/>
    </reaction>
</comment>
<comment type="cofactor">
    <cofactor evidence="1">
        <name>Mg(2+)</name>
        <dbReference type="ChEBI" id="CHEBI:18420"/>
    </cofactor>
    <text evidence="1">Binds 2 magnesium ions per subunit.</text>
</comment>
<comment type="pathway">
    <text evidence="1">Amino-acid biosynthesis; L-isoleucine biosynthesis; L-isoleucine from 2-oxobutanoate: step 2/4.</text>
</comment>
<comment type="pathway">
    <text evidence="1">Amino-acid biosynthesis; L-valine biosynthesis; L-valine from pyruvate: step 2/4.</text>
</comment>
<comment type="similarity">
    <text evidence="1">Belongs to the ketol-acid reductoisomerase family.</text>
</comment>
<reference key="1">
    <citation type="journal article" date="2008" name="DNA Res.">
        <title>Complete genome sequence and comparative analysis of the wild-type commensal Escherichia coli strain SE11 isolated from a healthy adult.</title>
        <authorList>
            <person name="Oshima K."/>
            <person name="Toh H."/>
            <person name="Ogura Y."/>
            <person name="Sasamoto H."/>
            <person name="Morita H."/>
            <person name="Park S.-H."/>
            <person name="Ooka T."/>
            <person name="Iyoda S."/>
            <person name="Taylor T.D."/>
            <person name="Hayashi T."/>
            <person name="Itoh K."/>
            <person name="Hattori M."/>
        </authorList>
    </citation>
    <scope>NUCLEOTIDE SEQUENCE [LARGE SCALE GENOMIC DNA]</scope>
    <source>
        <strain>SE11</strain>
    </source>
</reference>
<sequence>MANYFNTLNLRQQLAQLGKCRFMGRDEFADGASYLQGKKVVIVGCGAQGLNQGLNMRDSGLDISYALRKEAIAEKRASWRKATENGFKVGTYEELIPQADLVVNLTPDKQHSDVVRTVQPLMKDGAALGYSHGFNIVEVGEQIRKDITVVMVAPKCPGTEVREEYKRGFGVPTLIAVHPENDPKGEGMAIAKAWAAATGGHRAGVLESSFVAEVKSDLMGEQTILCGMLQAGSLLCFDKLVEEGTDPAYAEKLIQFGWETITEALKQGGITLMMDRLSNPAKLRAYALSEQLKEIMAPLFQKHMDDIISGEFSSGMMADWANDDKKLLTWREETGKTAFETAPQYEGKIGEQEYFDKGVLMIAMVKAGVELAFETMVDSGIIEESAYYESLHELPLIANTIARKRLYEMNVVISDTAEYGNYLFSYACVPLLKPFMAELQPGDLGKAIPEGAVDNAQLRDVNEAIRSHAIEQVGKKLRGYMTDMKRIAVAG</sequence>
<organism>
    <name type="scientific">Escherichia coli (strain SE11)</name>
    <dbReference type="NCBI Taxonomy" id="409438"/>
    <lineage>
        <taxon>Bacteria</taxon>
        <taxon>Pseudomonadati</taxon>
        <taxon>Pseudomonadota</taxon>
        <taxon>Gammaproteobacteria</taxon>
        <taxon>Enterobacterales</taxon>
        <taxon>Enterobacteriaceae</taxon>
        <taxon>Escherichia</taxon>
    </lineage>
</organism>
<gene>
    <name evidence="1" type="primary">ilvC</name>
    <name type="ordered locus">ECSE_4057</name>
</gene>
<accession>B6I4B1</accession>